<comment type="function">
    <text evidence="1">Part of the Sec protein translocase complex. Interacts with the SecYEG preprotein conducting channel. Has a central role in coupling the hydrolysis of ATP to the transfer of proteins into and across the cell membrane, serving both as a receptor for the preprotein-SecB complex and as an ATP-driven molecular motor driving the stepwise translocation of polypeptide chains across the membrane.</text>
</comment>
<comment type="catalytic activity">
    <reaction evidence="1">
        <text>ATP + H2O + cellular proteinSide 1 = ADP + phosphate + cellular proteinSide 2.</text>
        <dbReference type="EC" id="7.4.2.8"/>
    </reaction>
</comment>
<comment type="cofactor">
    <cofactor evidence="1">
        <name>Zn(2+)</name>
        <dbReference type="ChEBI" id="CHEBI:29105"/>
    </cofactor>
    <text evidence="1">May bind 1 zinc ion per subunit.</text>
</comment>
<comment type="subunit">
    <text evidence="1">Monomer and homodimer. Part of the essential Sec protein translocation apparatus which comprises SecA, SecYEG and auxiliary proteins SecDF-YajC and YidC.</text>
</comment>
<comment type="subcellular location">
    <subcellularLocation>
        <location evidence="1">Cell inner membrane</location>
        <topology evidence="1">Peripheral membrane protein</topology>
        <orientation evidence="1">Cytoplasmic side</orientation>
    </subcellularLocation>
    <subcellularLocation>
        <location evidence="1">Cytoplasm</location>
    </subcellularLocation>
    <text evidence="1">Distribution is 50-50.</text>
</comment>
<comment type="induction">
    <text evidence="1">Repressed under conditions of excess protein secretion capacity and derepressed when protein secretion becomes limiting. This is regulated by SecM.</text>
</comment>
<comment type="similarity">
    <text evidence="1">Belongs to the SecA family.</text>
</comment>
<proteinExistence type="inferred from homology"/>
<evidence type="ECO:0000255" key="1">
    <source>
        <dbReference type="HAMAP-Rule" id="MF_01382"/>
    </source>
</evidence>
<evidence type="ECO:0000256" key="2">
    <source>
        <dbReference type="SAM" id="MobiDB-lite"/>
    </source>
</evidence>
<sequence>MVMNILTKIFGSRNDRTLRRMRKNVDVINRLEPEMEKLSDEELQAKTLEFRVRLEKGESLENLLPEAFAVVRESSKRVFGMRHFDVQLIGGMVLNERCIAEMRTGEGKTLTATLPAYLNALTGRGVHVVTVNDYLAQRDAENNRPLFEFLGLSVGINLPGMPAPAKREAYAADITYGTNNEYGFDYLRDNMAFSPEERVQRKLYYALVDEVDSILIDEARTPLIISGPAEDSSELYISVNKIIPHLIRQEKEDSDTFHGEGHFSVDEKARQVNLTERGLVLVEELLVKEGIMEEGESLYSPTNIMLMHHVTAALRAHVLFTRDVDYIVKDGEVIIVDEHTGRTMQGRRWSDGLHQAVEAKEKVTIQNENQTLASITFQNYFRLYEKLAGMTGTADTEAFEFSSIYKLDTIVVPTNRPMIRKDLPDLVYMTEQEKIDAIIEDIKERSVKGQPILVGTISIEKSEVVSHALEKAGIKHNVLNAKFHAMEADIVAQAGQAGAVTIATNMAGRGTDIVLGGSWQAEVALLENPNDEQIAEIKAAWKVRHDAVLAAGGLHIIGTERHESRRIDNQLRGRSGRQGDAGSSRFYLSMEDALMRIFASDRVSNMMRKLGMKPGEAIEHPWVTKAIANAQRKVESRNFDIRKQLLEYDDVANDQRRAIYTQRNELLDVSDISETITSIREDVFKATIDSYIPPQSLEEMWDVEGLEQRLKNDFDLDMPVKAWLDKEPELHEETLRERIFQQALEVYHRKEEVVGSEVMRNFEKGVMLQTLDSLWKEHLAAMDYLRQGIHLRGYAQKDPKQEYKRESFSMFAAMLESLKYEVISTLSKVQVRMPEEIEALEQQRREEAERLARQQQLSHQEEDSLNTGSPAQADRKIGRNDPCPCGSGKKYKQCHGRLQK</sequence>
<organism>
    <name type="scientific">Pectobacterium carotovorum subsp. carotovorum (strain PC1)</name>
    <dbReference type="NCBI Taxonomy" id="561230"/>
    <lineage>
        <taxon>Bacteria</taxon>
        <taxon>Pseudomonadati</taxon>
        <taxon>Pseudomonadota</taxon>
        <taxon>Gammaproteobacteria</taxon>
        <taxon>Enterobacterales</taxon>
        <taxon>Pectobacteriaceae</taxon>
        <taxon>Pectobacterium</taxon>
    </lineage>
</organism>
<dbReference type="EC" id="7.4.2.8" evidence="1"/>
<dbReference type="EMBL" id="CP001657">
    <property type="protein sequence ID" value="ACT14598.1"/>
    <property type="molecule type" value="Genomic_DNA"/>
</dbReference>
<dbReference type="RefSeq" id="WP_015841718.1">
    <property type="nucleotide sequence ID" value="NC_012917.1"/>
</dbReference>
<dbReference type="SMR" id="C6DET4"/>
<dbReference type="STRING" id="561230.PC1_3583"/>
<dbReference type="KEGG" id="pct:PC1_3583"/>
<dbReference type="eggNOG" id="COG0653">
    <property type="taxonomic scope" value="Bacteria"/>
</dbReference>
<dbReference type="HOGENOM" id="CLU_005314_3_0_6"/>
<dbReference type="OrthoDB" id="9805579at2"/>
<dbReference type="Proteomes" id="UP000002736">
    <property type="component" value="Chromosome"/>
</dbReference>
<dbReference type="GO" id="GO:0031522">
    <property type="term" value="C:cell envelope Sec protein transport complex"/>
    <property type="evidence" value="ECO:0007669"/>
    <property type="project" value="TreeGrafter"/>
</dbReference>
<dbReference type="GO" id="GO:0005829">
    <property type="term" value="C:cytosol"/>
    <property type="evidence" value="ECO:0007669"/>
    <property type="project" value="TreeGrafter"/>
</dbReference>
<dbReference type="GO" id="GO:0005886">
    <property type="term" value="C:plasma membrane"/>
    <property type="evidence" value="ECO:0007669"/>
    <property type="project" value="UniProtKB-SubCell"/>
</dbReference>
<dbReference type="GO" id="GO:0005524">
    <property type="term" value="F:ATP binding"/>
    <property type="evidence" value="ECO:0007669"/>
    <property type="project" value="UniProtKB-UniRule"/>
</dbReference>
<dbReference type="GO" id="GO:0046872">
    <property type="term" value="F:metal ion binding"/>
    <property type="evidence" value="ECO:0007669"/>
    <property type="project" value="UniProtKB-KW"/>
</dbReference>
<dbReference type="GO" id="GO:0008564">
    <property type="term" value="F:protein-exporting ATPase activity"/>
    <property type="evidence" value="ECO:0007669"/>
    <property type="project" value="UniProtKB-EC"/>
</dbReference>
<dbReference type="GO" id="GO:0065002">
    <property type="term" value="P:intracellular protein transmembrane transport"/>
    <property type="evidence" value="ECO:0007669"/>
    <property type="project" value="UniProtKB-UniRule"/>
</dbReference>
<dbReference type="GO" id="GO:0017038">
    <property type="term" value="P:protein import"/>
    <property type="evidence" value="ECO:0007669"/>
    <property type="project" value="InterPro"/>
</dbReference>
<dbReference type="GO" id="GO:0006605">
    <property type="term" value="P:protein targeting"/>
    <property type="evidence" value="ECO:0007669"/>
    <property type="project" value="UniProtKB-UniRule"/>
</dbReference>
<dbReference type="GO" id="GO:0043952">
    <property type="term" value="P:protein transport by the Sec complex"/>
    <property type="evidence" value="ECO:0007669"/>
    <property type="project" value="TreeGrafter"/>
</dbReference>
<dbReference type="CDD" id="cd17928">
    <property type="entry name" value="DEXDc_SecA"/>
    <property type="match status" value="1"/>
</dbReference>
<dbReference type="CDD" id="cd18803">
    <property type="entry name" value="SF2_C_secA"/>
    <property type="match status" value="1"/>
</dbReference>
<dbReference type="FunFam" id="1.10.3060.10:FF:000001">
    <property type="entry name" value="Preprotein translocase subunit SecA"/>
    <property type="match status" value="1"/>
</dbReference>
<dbReference type="FunFam" id="3.40.50.300:FF:000081">
    <property type="entry name" value="Preprotein translocase subunit SecA"/>
    <property type="match status" value="1"/>
</dbReference>
<dbReference type="FunFam" id="3.40.50.300:FF:000113">
    <property type="entry name" value="Preprotein translocase subunit SecA"/>
    <property type="match status" value="1"/>
</dbReference>
<dbReference type="FunFam" id="3.90.1440.10:FF:000001">
    <property type="entry name" value="Preprotein translocase subunit SecA"/>
    <property type="match status" value="1"/>
</dbReference>
<dbReference type="Gene3D" id="1.10.3060.10">
    <property type="entry name" value="Helical scaffold and wing domains of SecA"/>
    <property type="match status" value="1"/>
</dbReference>
<dbReference type="Gene3D" id="3.40.50.300">
    <property type="entry name" value="P-loop containing nucleotide triphosphate hydrolases"/>
    <property type="match status" value="2"/>
</dbReference>
<dbReference type="Gene3D" id="3.90.1440.10">
    <property type="entry name" value="SecA, preprotein cross-linking domain"/>
    <property type="match status" value="1"/>
</dbReference>
<dbReference type="HAMAP" id="MF_01382">
    <property type="entry name" value="SecA"/>
    <property type="match status" value="1"/>
</dbReference>
<dbReference type="InterPro" id="IPR014001">
    <property type="entry name" value="Helicase_ATP-bd"/>
</dbReference>
<dbReference type="InterPro" id="IPR001650">
    <property type="entry name" value="Helicase_C-like"/>
</dbReference>
<dbReference type="InterPro" id="IPR027417">
    <property type="entry name" value="P-loop_NTPase"/>
</dbReference>
<dbReference type="InterPro" id="IPR004027">
    <property type="entry name" value="SEC_C_motif"/>
</dbReference>
<dbReference type="InterPro" id="IPR000185">
    <property type="entry name" value="SecA"/>
</dbReference>
<dbReference type="InterPro" id="IPR020937">
    <property type="entry name" value="SecA_CS"/>
</dbReference>
<dbReference type="InterPro" id="IPR011115">
    <property type="entry name" value="SecA_DEAD"/>
</dbReference>
<dbReference type="InterPro" id="IPR014018">
    <property type="entry name" value="SecA_motor_DEAD"/>
</dbReference>
<dbReference type="InterPro" id="IPR011130">
    <property type="entry name" value="SecA_preprotein_X-link_dom"/>
</dbReference>
<dbReference type="InterPro" id="IPR044722">
    <property type="entry name" value="SecA_SF2_C"/>
</dbReference>
<dbReference type="InterPro" id="IPR011116">
    <property type="entry name" value="SecA_Wing/Scaffold"/>
</dbReference>
<dbReference type="InterPro" id="IPR036266">
    <property type="entry name" value="SecA_Wing/Scaffold_sf"/>
</dbReference>
<dbReference type="InterPro" id="IPR036670">
    <property type="entry name" value="SecA_X-link_sf"/>
</dbReference>
<dbReference type="NCBIfam" id="NF009538">
    <property type="entry name" value="PRK12904.1"/>
    <property type="match status" value="1"/>
</dbReference>
<dbReference type="NCBIfam" id="TIGR00963">
    <property type="entry name" value="secA"/>
    <property type="match status" value="1"/>
</dbReference>
<dbReference type="PANTHER" id="PTHR30612:SF0">
    <property type="entry name" value="CHLOROPLAST PROTEIN-TRANSPORTING ATPASE"/>
    <property type="match status" value="1"/>
</dbReference>
<dbReference type="PANTHER" id="PTHR30612">
    <property type="entry name" value="SECA INNER MEMBRANE COMPONENT OF SEC PROTEIN SECRETION SYSTEM"/>
    <property type="match status" value="1"/>
</dbReference>
<dbReference type="Pfam" id="PF21090">
    <property type="entry name" value="P-loop_SecA"/>
    <property type="match status" value="1"/>
</dbReference>
<dbReference type="Pfam" id="PF02810">
    <property type="entry name" value="SEC-C"/>
    <property type="match status" value="1"/>
</dbReference>
<dbReference type="Pfam" id="PF07517">
    <property type="entry name" value="SecA_DEAD"/>
    <property type="match status" value="1"/>
</dbReference>
<dbReference type="Pfam" id="PF01043">
    <property type="entry name" value="SecA_PP_bind"/>
    <property type="match status" value="1"/>
</dbReference>
<dbReference type="Pfam" id="PF07516">
    <property type="entry name" value="SecA_SW"/>
    <property type="match status" value="1"/>
</dbReference>
<dbReference type="PRINTS" id="PR00906">
    <property type="entry name" value="SECA"/>
</dbReference>
<dbReference type="SMART" id="SM00957">
    <property type="entry name" value="SecA_DEAD"/>
    <property type="match status" value="1"/>
</dbReference>
<dbReference type="SMART" id="SM00958">
    <property type="entry name" value="SecA_PP_bind"/>
    <property type="match status" value="1"/>
</dbReference>
<dbReference type="SUPFAM" id="SSF81886">
    <property type="entry name" value="Helical scaffold and wing domains of SecA"/>
    <property type="match status" value="1"/>
</dbReference>
<dbReference type="SUPFAM" id="SSF52540">
    <property type="entry name" value="P-loop containing nucleoside triphosphate hydrolases"/>
    <property type="match status" value="2"/>
</dbReference>
<dbReference type="SUPFAM" id="SSF81767">
    <property type="entry name" value="Pre-protein crosslinking domain of SecA"/>
    <property type="match status" value="1"/>
</dbReference>
<dbReference type="PROSITE" id="PS01312">
    <property type="entry name" value="SECA"/>
    <property type="match status" value="1"/>
</dbReference>
<dbReference type="PROSITE" id="PS51196">
    <property type="entry name" value="SECA_MOTOR_DEAD"/>
    <property type="match status" value="1"/>
</dbReference>
<accession>C6DET4</accession>
<protein>
    <recommendedName>
        <fullName evidence="1">Protein translocase subunit SecA</fullName>
        <ecNumber evidence="1">7.4.2.8</ecNumber>
    </recommendedName>
</protein>
<keyword id="KW-0067">ATP-binding</keyword>
<keyword id="KW-0997">Cell inner membrane</keyword>
<keyword id="KW-1003">Cell membrane</keyword>
<keyword id="KW-0963">Cytoplasm</keyword>
<keyword id="KW-0472">Membrane</keyword>
<keyword id="KW-0479">Metal-binding</keyword>
<keyword id="KW-0547">Nucleotide-binding</keyword>
<keyword id="KW-0653">Protein transport</keyword>
<keyword id="KW-1278">Translocase</keyword>
<keyword id="KW-0811">Translocation</keyword>
<keyword id="KW-0813">Transport</keyword>
<keyword id="KW-0862">Zinc</keyword>
<reference key="1">
    <citation type="submission" date="2009-07" db="EMBL/GenBank/DDBJ databases">
        <title>Complete sequence of Pectobacterium carotovorum subsp. carotovorum PC1.</title>
        <authorList>
            <consortium name="US DOE Joint Genome Institute"/>
            <person name="Lucas S."/>
            <person name="Copeland A."/>
            <person name="Lapidus A."/>
            <person name="Glavina del Rio T."/>
            <person name="Tice H."/>
            <person name="Bruce D."/>
            <person name="Goodwin L."/>
            <person name="Pitluck S."/>
            <person name="Munk A.C."/>
            <person name="Brettin T."/>
            <person name="Detter J.C."/>
            <person name="Han C."/>
            <person name="Tapia R."/>
            <person name="Larimer F."/>
            <person name="Land M."/>
            <person name="Hauser L."/>
            <person name="Kyrpides N."/>
            <person name="Mikhailova N."/>
            <person name="Balakrishnan V."/>
            <person name="Glasner J."/>
            <person name="Perna N.T."/>
        </authorList>
    </citation>
    <scope>NUCLEOTIDE SEQUENCE [LARGE SCALE GENOMIC DNA]</scope>
    <source>
        <strain>PC1</strain>
    </source>
</reference>
<name>SECA_PECCP</name>
<feature type="chain" id="PRO_1000215115" description="Protein translocase subunit SecA">
    <location>
        <begin position="1"/>
        <end position="900"/>
    </location>
</feature>
<feature type="region of interest" description="Disordered" evidence="2">
    <location>
        <begin position="842"/>
        <end position="900"/>
    </location>
</feature>
<feature type="compositionally biased region" description="Basic and acidic residues" evidence="2">
    <location>
        <begin position="842"/>
        <end position="852"/>
    </location>
</feature>
<feature type="compositionally biased region" description="Basic residues" evidence="2">
    <location>
        <begin position="889"/>
        <end position="900"/>
    </location>
</feature>
<feature type="binding site" evidence="1">
    <location>
        <position position="87"/>
    </location>
    <ligand>
        <name>ATP</name>
        <dbReference type="ChEBI" id="CHEBI:30616"/>
    </ligand>
</feature>
<feature type="binding site" evidence="1">
    <location>
        <begin position="105"/>
        <end position="109"/>
    </location>
    <ligand>
        <name>ATP</name>
        <dbReference type="ChEBI" id="CHEBI:30616"/>
    </ligand>
</feature>
<feature type="binding site" evidence="1">
    <location>
        <position position="512"/>
    </location>
    <ligand>
        <name>ATP</name>
        <dbReference type="ChEBI" id="CHEBI:30616"/>
    </ligand>
</feature>
<feature type="binding site" evidence="1">
    <location>
        <position position="883"/>
    </location>
    <ligand>
        <name>Zn(2+)</name>
        <dbReference type="ChEBI" id="CHEBI:29105"/>
    </ligand>
</feature>
<feature type="binding site" evidence="1">
    <location>
        <position position="885"/>
    </location>
    <ligand>
        <name>Zn(2+)</name>
        <dbReference type="ChEBI" id="CHEBI:29105"/>
    </ligand>
</feature>
<feature type="binding site" evidence="1">
    <location>
        <position position="894"/>
    </location>
    <ligand>
        <name>Zn(2+)</name>
        <dbReference type="ChEBI" id="CHEBI:29105"/>
    </ligand>
</feature>
<feature type="binding site" evidence="1">
    <location>
        <position position="895"/>
    </location>
    <ligand>
        <name>Zn(2+)</name>
        <dbReference type="ChEBI" id="CHEBI:29105"/>
    </ligand>
</feature>
<gene>
    <name evidence="1" type="primary">secA</name>
    <name type="ordered locus">PC1_3583</name>
</gene>